<reference key="1">
    <citation type="journal article" date="2005" name="PLoS Biol.">
        <title>The genomes of Oryza sativa: a history of duplications.</title>
        <authorList>
            <person name="Yu J."/>
            <person name="Wang J."/>
            <person name="Lin W."/>
            <person name="Li S."/>
            <person name="Li H."/>
            <person name="Zhou J."/>
            <person name="Ni P."/>
            <person name="Dong W."/>
            <person name="Hu S."/>
            <person name="Zeng C."/>
            <person name="Zhang J."/>
            <person name="Zhang Y."/>
            <person name="Li R."/>
            <person name="Xu Z."/>
            <person name="Li S."/>
            <person name="Li X."/>
            <person name="Zheng H."/>
            <person name="Cong L."/>
            <person name="Lin L."/>
            <person name="Yin J."/>
            <person name="Geng J."/>
            <person name="Li G."/>
            <person name="Shi J."/>
            <person name="Liu J."/>
            <person name="Lv H."/>
            <person name="Li J."/>
            <person name="Wang J."/>
            <person name="Deng Y."/>
            <person name="Ran L."/>
            <person name="Shi X."/>
            <person name="Wang X."/>
            <person name="Wu Q."/>
            <person name="Li C."/>
            <person name="Ren X."/>
            <person name="Wang J."/>
            <person name="Wang X."/>
            <person name="Li D."/>
            <person name="Liu D."/>
            <person name="Zhang X."/>
            <person name="Ji Z."/>
            <person name="Zhao W."/>
            <person name="Sun Y."/>
            <person name="Zhang Z."/>
            <person name="Bao J."/>
            <person name="Han Y."/>
            <person name="Dong L."/>
            <person name="Ji J."/>
            <person name="Chen P."/>
            <person name="Wu S."/>
            <person name="Liu J."/>
            <person name="Xiao Y."/>
            <person name="Bu D."/>
            <person name="Tan J."/>
            <person name="Yang L."/>
            <person name="Ye C."/>
            <person name="Zhang J."/>
            <person name="Xu J."/>
            <person name="Zhou Y."/>
            <person name="Yu Y."/>
            <person name="Zhang B."/>
            <person name="Zhuang S."/>
            <person name="Wei H."/>
            <person name="Liu B."/>
            <person name="Lei M."/>
            <person name="Yu H."/>
            <person name="Li Y."/>
            <person name="Xu H."/>
            <person name="Wei S."/>
            <person name="He X."/>
            <person name="Fang L."/>
            <person name="Zhang Z."/>
            <person name="Zhang Y."/>
            <person name="Huang X."/>
            <person name="Su Z."/>
            <person name="Tong W."/>
            <person name="Li J."/>
            <person name="Tong Z."/>
            <person name="Li S."/>
            <person name="Ye J."/>
            <person name="Wang L."/>
            <person name="Fang L."/>
            <person name="Lei T."/>
            <person name="Chen C.-S."/>
            <person name="Chen H.-C."/>
            <person name="Xu Z."/>
            <person name="Li H."/>
            <person name="Huang H."/>
            <person name="Zhang F."/>
            <person name="Xu H."/>
            <person name="Li N."/>
            <person name="Zhao C."/>
            <person name="Li S."/>
            <person name="Dong L."/>
            <person name="Huang Y."/>
            <person name="Li L."/>
            <person name="Xi Y."/>
            <person name="Qi Q."/>
            <person name="Li W."/>
            <person name="Zhang B."/>
            <person name="Hu W."/>
            <person name="Zhang Y."/>
            <person name="Tian X."/>
            <person name="Jiao Y."/>
            <person name="Liang X."/>
            <person name="Jin J."/>
            <person name="Gao L."/>
            <person name="Zheng W."/>
            <person name="Hao B."/>
            <person name="Liu S.-M."/>
            <person name="Wang W."/>
            <person name="Yuan L."/>
            <person name="Cao M."/>
            <person name="McDermott J."/>
            <person name="Samudrala R."/>
            <person name="Wang J."/>
            <person name="Wong G.K.-S."/>
            <person name="Yang H."/>
        </authorList>
    </citation>
    <scope>NUCLEOTIDE SEQUENCE [LARGE SCALE GENOMIC DNA]</scope>
    <source>
        <strain>cv. 93-11</strain>
    </source>
</reference>
<gene>
    <name type="primary">CDKG-1</name>
    <name type="ORF">OsI_007814</name>
</gene>
<protein>
    <recommendedName>
        <fullName>Cyclin-dependent kinase G-1</fullName>
        <shortName>CDKG;1</shortName>
        <ecNumber>2.7.11.22</ecNumber>
        <ecNumber>2.7.11.23</ecNumber>
    </recommendedName>
</protein>
<comment type="catalytic activity">
    <reaction>
        <text>L-seryl-[protein] + ATP = O-phospho-L-seryl-[protein] + ADP + H(+)</text>
        <dbReference type="Rhea" id="RHEA:17989"/>
        <dbReference type="Rhea" id="RHEA-COMP:9863"/>
        <dbReference type="Rhea" id="RHEA-COMP:11604"/>
        <dbReference type="ChEBI" id="CHEBI:15378"/>
        <dbReference type="ChEBI" id="CHEBI:29999"/>
        <dbReference type="ChEBI" id="CHEBI:30616"/>
        <dbReference type="ChEBI" id="CHEBI:83421"/>
        <dbReference type="ChEBI" id="CHEBI:456216"/>
        <dbReference type="EC" id="2.7.11.22"/>
    </reaction>
</comment>
<comment type="catalytic activity">
    <reaction>
        <text>L-threonyl-[protein] + ATP = O-phospho-L-threonyl-[protein] + ADP + H(+)</text>
        <dbReference type="Rhea" id="RHEA:46608"/>
        <dbReference type="Rhea" id="RHEA-COMP:11060"/>
        <dbReference type="Rhea" id="RHEA-COMP:11605"/>
        <dbReference type="ChEBI" id="CHEBI:15378"/>
        <dbReference type="ChEBI" id="CHEBI:30013"/>
        <dbReference type="ChEBI" id="CHEBI:30616"/>
        <dbReference type="ChEBI" id="CHEBI:61977"/>
        <dbReference type="ChEBI" id="CHEBI:456216"/>
        <dbReference type="EC" id="2.7.11.22"/>
    </reaction>
</comment>
<comment type="catalytic activity">
    <reaction>
        <text>[DNA-directed RNA polymerase] + ATP = phospho-[DNA-directed RNA polymerase] + ADP + H(+)</text>
        <dbReference type="Rhea" id="RHEA:10216"/>
        <dbReference type="Rhea" id="RHEA-COMP:11321"/>
        <dbReference type="Rhea" id="RHEA-COMP:11322"/>
        <dbReference type="ChEBI" id="CHEBI:15378"/>
        <dbReference type="ChEBI" id="CHEBI:30616"/>
        <dbReference type="ChEBI" id="CHEBI:43176"/>
        <dbReference type="ChEBI" id="CHEBI:68546"/>
        <dbReference type="ChEBI" id="CHEBI:456216"/>
        <dbReference type="EC" id="2.7.11.23"/>
    </reaction>
</comment>
<comment type="similarity">
    <text evidence="5">Belongs to the protein kinase superfamily. CMGC Ser/Thr protein kinase family. CDC2/CDKX subfamily.</text>
</comment>
<name>CDKG1_ORYSI</name>
<evidence type="ECO:0000250" key="1"/>
<evidence type="ECO:0000255" key="2">
    <source>
        <dbReference type="PROSITE-ProRule" id="PRU00159"/>
    </source>
</evidence>
<evidence type="ECO:0000255" key="3">
    <source>
        <dbReference type="PROSITE-ProRule" id="PRU10027"/>
    </source>
</evidence>
<evidence type="ECO:0000256" key="4">
    <source>
        <dbReference type="SAM" id="MobiDB-lite"/>
    </source>
</evidence>
<evidence type="ECO:0000305" key="5"/>
<proteinExistence type="inferred from homology"/>
<accession>A2X6X1</accession>
<organism>
    <name type="scientific">Oryza sativa subsp. indica</name>
    <name type="common">Rice</name>
    <dbReference type="NCBI Taxonomy" id="39946"/>
    <lineage>
        <taxon>Eukaryota</taxon>
        <taxon>Viridiplantae</taxon>
        <taxon>Streptophyta</taxon>
        <taxon>Embryophyta</taxon>
        <taxon>Tracheophyta</taxon>
        <taxon>Spermatophyta</taxon>
        <taxon>Magnoliopsida</taxon>
        <taxon>Liliopsida</taxon>
        <taxon>Poales</taxon>
        <taxon>Poaceae</taxon>
        <taxon>BOP clade</taxon>
        <taxon>Oryzoideae</taxon>
        <taxon>Oryzeae</taxon>
        <taxon>Oryzinae</taxon>
        <taxon>Oryza</taxon>
        <taxon>Oryza sativa</taxon>
    </lineage>
</organism>
<sequence>MAAGSHGGYRGYEVAREREHDVGVSRRSKEHYHHRHPSRHRDSERRRDGGRSGGRELSNGYSHRRDSPRPPPRRRPSEGRTEDREPGEVSGGSGSERSGERPMKTREPRENGVTRVSKEEAKMSPSKKRKQSPVIWDRNGSQRQARDPVRGIREVDAVVAEIIMHQSHSLPVMSSLSSIGDGHSPMILDVSVDKVQEYEKNRIVDEEEEGYPTMRNILTSRWADAGDEEENVFVPKKKKSVSPVDSIERGSTKKVTSPESGEVLVYNSVRSSSRSSDSGVLQGSANRDLEVEKGDNIDVEKAADDDYPAGHLLDSDFEGEDCRSETPECTRSPRRCINMLQGCRSVDEFERLNTINEGTYGVVFRVRDKRTGEIVALKKVKMEKEREGFPLTSLREMNILLSFHHPSIVEVKEVVVGSNDRDIFMVMEYMEHDLKGVMETMKQPYSQSEVKCLMLQLLEGVKYLHDNWVLHRDLKTSNLLLNNRGELKICDFGLSRQYGSPLKPYTQLVVTLWYRAPELLLGAKDYSTAIDMWSLGCIMGELLSKGPLFNGKSEIDQLDKIFRTLGTPDENIWPGYSKLPGATVKFGKQTHNRLRDKFRAVSFTGGPMLSEAGFDLLNRLLTYDPEKRISAEDALNHEWFRELPLPRSKDFMPTFPALNEQDRRFKKHMKSPDPLEEQWMKEQGNNGDRGLFG</sequence>
<feature type="chain" id="PRO_0000296111" description="Cyclin-dependent kinase G-1">
    <location>
        <begin position="1"/>
        <end position="693"/>
    </location>
</feature>
<feature type="domain" description="Protein kinase" evidence="2">
    <location>
        <begin position="349"/>
        <end position="640"/>
    </location>
</feature>
<feature type="region of interest" description="Disordered" evidence="4">
    <location>
        <begin position="1"/>
        <end position="148"/>
    </location>
</feature>
<feature type="region of interest" description="Disordered" evidence="4">
    <location>
        <begin position="236"/>
        <end position="308"/>
    </location>
</feature>
<feature type="region of interest" description="Disordered" evidence="4">
    <location>
        <begin position="664"/>
        <end position="693"/>
    </location>
</feature>
<feature type="compositionally biased region" description="Gly residues" evidence="4">
    <location>
        <begin position="1"/>
        <end position="10"/>
    </location>
</feature>
<feature type="compositionally biased region" description="Basic and acidic residues" evidence="4">
    <location>
        <begin position="13"/>
        <end position="24"/>
    </location>
</feature>
<feature type="compositionally biased region" description="Basic residues" evidence="4">
    <location>
        <begin position="26"/>
        <end position="39"/>
    </location>
</feature>
<feature type="compositionally biased region" description="Basic and acidic residues" evidence="4">
    <location>
        <begin position="40"/>
        <end position="54"/>
    </location>
</feature>
<feature type="compositionally biased region" description="Basic and acidic residues" evidence="4">
    <location>
        <begin position="75"/>
        <end position="87"/>
    </location>
</feature>
<feature type="compositionally biased region" description="Basic and acidic residues" evidence="4">
    <location>
        <begin position="97"/>
        <end position="122"/>
    </location>
</feature>
<feature type="compositionally biased region" description="Low complexity" evidence="4">
    <location>
        <begin position="268"/>
        <end position="284"/>
    </location>
</feature>
<feature type="compositionally biased region" description="Basic and acidic residues" evidence="4">
    <location>
        <begin position="287"/>
        <end position="304"/>
    </location>
</feature>
<feature type="active site" description="Proton acceptor" evidence="2 3">
    <location>
        <position position="473"/>
    </location>
</feature>
<feature type="binding site" evidence="2">
    <location>
        <begin position="355"/>
        <end position="363"/>
    </location>
    <ligand>
        <name>ATP</name>
        <dbReference type="ChEBI" id="CHEBI:30616"/>
    </ligand>
</feature>
<feature type="binding site" evidence="2">
    <location>
        <position position="378"/>
    </location>
    <ligand>
        <name>ATP</name>
        <dbReference type="ChEBI" id="CHEBI:30616"/>
    </ligand>
</feature>
<feature type="modified residue" description="Phosphothreonine" evidence="1">
    <location>
        <position position="359"/>
    </location>
</feature>
<feature type="modified residue" description="Phosphotyrosine" evidence="1">
    <location>
        <position position="360"/>
    </location>
</feature>
<feature type="modified residue" description="Phosphoserine" evidence="1">
    <location>
        <position position="500"/>
    </location>
</feature>
<feature type="modified residue" description="Phosphothreonine" evidence="1">
    <location>
        <position position="506"/>
    </location>
</feature>
<keyword id="KW-0067">ATP-binding</keyword>
<keyword id="KW-0418">Kinase</keyword>
<keyword id="KW-0547">Nucleotide-binding</keyword>
<keyword id="KW-0597">Phosphoprotein</keyword>
<keyword id="KW-1185">Reference proteome</keyword>
<keyword id="KW-0723">Serine/threonine-protein kinase</keyword>
<keyword id="KW-0808">Transferase</keyword>
<dbReference type="EC" id="2.7.11.22"/>
<dbReference type="EC" id="2.7.11.23"/>
<dbReference type="EMBL" id="CM000127">
    <property type="protein sequence ID" value="EAY86581.1"/>
    <property type="molecule type" value="Genomic_DNA"/>
</dbReference>
<dbReference type="SMR" id="A2X6X1"/>
<dbReference type="STRING" id="39946.A2X6X1"/>
<dbReference type="EnsemblPlants" id="BGIOSGA008570-TA">
    <property type="protein sequence ID" value="BGIOSGA008570-PA"/>
    <property type="gene ID" value="BGIOSGA008570"/>
</dbReference>
<dbReference type="Gramene" id="BGIOSGA008570-TA">
    <property type="protein sequence ID" value="BGIOSGA008570-PA"/>
    <property type="gene ID" value="BGIOSGA008570"/>
</dbReference>
<dbReference type="HOGENOM" id="CLU_000288_91_2_1"/>
<dbReference type="OMA" id="HEHEKNG"/>
<dbReference type="Proteomes" id="UP000007015">
    <property type="component" value="Chromosome 2"/>
</dbReference>
<dbReference type="GO" id="GO:0005634">
    <property type="term" value="C:nucleus"/>
    <property type="evidence" value="ECO:0007669"/>
    <property type="project" value="TreeGrafter"/>
</dbReference>
<dbReference type="GO" id="GO:0005524">
    <property type="term" value="F:ATP binding"/>
    <property type="evidence" value="ECO:0007669"/>
    <property type="project" value="UniProtKB-KW"/>
</dbReference>
<dbReference type="GO" id="GO:0004693">
    <property type="term" value="F:cyclin-dependent protein serine/threonine kinase activity"/>
    <property type="evidence" value="ECO:0007669"/>
    <property type="project" value="UniProtKB-EC"/>
</dbReference>
<dbReference type="GO" id="GO:0106310">
    <property type="term" value="F:protein serine kinase activity"/>
    <property type="evidence" value="ECO:0007669"/>
    <property type="project" value="RHEA"/>
</dbReference>
<dbReference type="GO" id="GO:0008353">
    <property type="term" value="F:RNA polymerase II CTD heptapeptide repeat kinase activity"/>
    <property type="evidence" value="ECO:0007669"/>
    <property type="project" value="UniProtKB-EC"/>
</dbReference>
<dbReference type="GO" id="GO:0007346">
    <property type="term" value="P:regulation of mitotic cell cycle"/>
    <property type="evidence" value="ECO:0007669"/>
    <property type="project" value="TreeGrafter"/>
</dbReference>
<dbReference type="CDD" id="cd07843">
    <property type="entry name" value="STKc_CDC2L1"/>
    <property type="match status" value="1"/>
</dbReference>
<dbReference type="FunFam" id="1.10.510.10:FF:000211">
    <property type="entry name" value="Cyclin-dependent kinase G-2"/>
    <property type="match status" value="1"/>
</dbReference>
<dbReference type="FunFam" id="3.30.200.20:FF:000172">
    <property type="entry name" value="cyclin-dependent kinase G-2 isoform X1"/>
    <property type="match status" value="1"/>
</dbReference>
<dbReference type="Gene3D" id="3.30.200.20">
    <property type="entry name" value="Phosphorylase Kinase, domain 1"/>
    <property type="match status" value="1"/>
</dbReference>
<dbReference type="Gene3D" id="1.10.510.10">
    <property type="entry name" value="Transferase(Phosphotransferase) domain 1"/>
    <property type="match status" value="1"/>
</dbReference>
<dbReference type="InterPro" id="IPR050108">
    <property type="entry name" value="CDK"/>
</dbReference>
<dbReference type="InterPro" id="IPR045267">
    <property type="entry name" value="CDK11/PITSLRE_STKc"/>
</dbReference>
<dbReference type="InterPro" id="IPR011009">
    <property type="entry name" value="Kinase-like_dom_sf"/>
</dbReference>
<dbReference type="InterPro" id="IPR000719">
    <property type="entry name" value="Prot_kinase_dom"/>
</dbReference>
<dbReference type="InterPro" id="IPR008271">
    <property type="entry name" value="Ser/Thr_kinase_AS"/>
</dbReference>
<dbReference type="PANTHER" id="PTHR24056">
    <property type="entry name" value="CELL DIVISION PROTEIN KINASE"/>
    <property type="match status" value="1"/>
</dbReference>
<dbReference type="PANTHER" id="PTHR24056:SF403">
    <property type="entry name" value="CYCLIN-DEPENDENT KINASE G-1"/>
    <property type="match status" value="1"/>
</dbReference>
<dbReference type="Pfam" id="PF00069">
    <property type="entry name" value="Pkinase"/>
    <property type="match status" value="1"/>
</dbReference>
<dbReference type="SMART" id="SM00220">
    <property type="entry name" value="S_TKc"/>
    <property type="match status" value="1"/>
</dbReference>
<dbReference type="SUPFAM" id="SSF56112">
    <property type="entry name" value="Protein kinase-like (PK-like)"/>
    <property type="match status" value="1"/>
</dbReference>
<dbReference type="PROSITE" id="PS50011">
    <property type="entry name" value="PROTEIN_KINASE_DOM"/>
    <property type="match status" value="1"/>
</dbReference>
<dbReference type="PROSITE" id="PS00108">
    <property type="entry name" value="PROTEIN_KINASE_ST"/>
    <property type="match status" value="1"/>
</dbReference>